<sequence length="145" mass="16581">MRHRVSGRKLNRTTSHLLAMLANMSVSLIQHEQINTTLPKAKELRPFVEKLITVAKKGNLNARRYLISKIKNEIAVEKLMTTLAPRYAERHGGYIRILKAGFRYGDMAPMAYIEFVDRNIESKGKEFKALKNDARNAKLIAEQSN</sequence>
<feature type="chain" id="PRO_1000055897" description="Large ribosomal subunit protein bL17">
    <location>
        <begin position="1"/>
        <end position="145"/>
    </location>
</feature>
<gene>
    <name evidence="1" type="primary">rplQ</name>
    <name type="ordered locus">OTBS_0352</name>
</gene>
<proteinExistence type="inferred from homology"/>
<accession>A5CCI8</accession>
<protein>
    <recommendedName>
        <fullName evidence="1">Large ribosomal subunit protein bL17</fullName>
    </recommendedName>
    <alternativeName>
        <fullName evidence="2">50S ribosomal protein L17</fullName>
    </alternativeName>
</protein>
<name>RL17_ORITB</name>
<evidence type="ECO:0000255" key="1">
    <source>
        <dbReference type="HAMAP-Rule" id="MF_01368"/>
    </source>
</evidence>
<evidence type="ECO:0000305" key="2"/>
<comment type="subunit">
    <text evidence="1">Part of the 50S ribosomal subunit. Contacts protein L32.</text>
</comment>
<comment type="similarity">
    <text evidence="1">Belongs to the bacterial ribosomal protein bL17 family.</text>
</comment>
<organism>
    <name type="scientific">Orientia tsutsugamushi (strain Boryong)</name>
    <name type="common">Rickettsia tsutsugamushi</name>
    <dbReference type="NCBI Taxonomy" id="357244"/>
    <lineage>
        <taxon>Bacteria</taxon>
        <taxon>Pseudomonadati</taxon>
        <taxon>Pseudomonadota</taxon>
        <taxon>Alphaproteobacteria</taxon>
        <taxon>Rickettsiales</taxon>
        <taxon>Rickettsiaceae</taxon>
        <taxon>Rickettsieae</taxon>
        <taxon>Orientia</taxon>
    </lineage>
</organism>
<keyword id="KW-1185">Reference proteome</keyword>
<keyword id="KW-0687">Ribonucleoprotein</keyword>
<keyword id="KW-0689">Ribosomal protein</keyword>
<reference key="1">
    <citation type="journal article" date="2007" name="Proc. Natl. Acad. Sci. U.S.A.">
        <title>The Orientia tsutsugamushi genome reveals massive proliferation of conjugative type IV secretion system and host-cell interaction genes.</title>
        <authorList>
            <person name="Cho N.-H."/>
            <person name="Kim H.-R."/>
            <person name="Lee J.-H."/>
            <person name="Kim S.-Y."/>
            <person name="Kim J."/>
            <person name="Cha S."/>
            <person name="Kim S.-Y."/>
            <person name="Darby A.C."/>
            <person name="Fuxelius H.-H."/>
            <person name="Yin J."/>
            <person name="Kim J.H."/>
            <person name="Kim J."/>
            <person name="Lee S.J."/>
            <person name="Koh Y.-S."/>
            <person name="Jang W.-J."/>
            <person name="Park K.-H."/>
            <person name="Andersson S.G.E."/>
            <person name="Choi M.-S."/>
            <person name="Kim I.-S."/>
        </authorList>
    </citation>
    <scope>NUCLEOTIDE SEQUENCE [LARGE SCALE GENOMIC DNA]</scope>
    <source>
        <strain>Boryong</strain>
    </source>
</reference>
<dbReference type="EMBL" id="AM494475">
    <property type="protein sequence ID" value="CAM79418.1"/>
    <property type="molecule type" value="Genomic_DNA"/>
</dbReference>
<dbReference type="RefSeq" id="WP_011944416.1">
    <property type="nucleotide sequence ID" value="NC_009488.1"/>
</dbReference>
<dbReference type="SMR" id="A5CCI8"/>
<dbReference type="KEGG" id="ots:OTBS_0352"/>
<dbReference type="eggNOG" id="COG0203">
    <property type="taxonomic scope" value="Bacteria"/>
</dbReference>
<dbReference type="HOGENOM" id="CLU_074407_2_0_5"/>
<dbReference type="Proteomes" id="UP000001565">
    <property type="component" value="Chromosome"/>
</dbReference>
<dbReference type="GO" id="GO:0022625">
    <property type="term" value="C:cytosolic large ribosomal subunit"/>
    <property type="evidence" value="ECO:0007669"/>
    <property type="project" value="TreeGrafter"/>
</dbReference>
<dbReference type="GO" id="GO:0003735">
    <property type="term" value="F:structural constituent of ribosome"/>
    <property type="evidence" value="ECO:0007669"/>
    <property type="project" value="InterPro"/>
</dbReference>
<dbReference type="GO" id="GO:0006412">
    <property type="term" value="P:translation"/>
    <property type="evidence" value="ECO:0007669"/>
    <property type="project" value="UniProtKB-UniRule"/>
</dbReference>
<dbReference type="FunFam" id="3.90.1030.10:FF:000001">
    <property type="entry name" value="50S ribosomal protein L17"/>
    <property type="match status" value="1"/>
</dbReference>
<dbReference type="Gene3D" id="3.90.1030.10">
    <property type="entry name" value="Ribosomal protein L17"/>
    <property type="match status" value="1"/>
</dbReference>
<dbReference type="HAMAP" id="MF_01368">
    <property type="entry name" value="Ribosomal_bL17"/>
    <property type="match status" value="1"/>
</dbReference>
<dbReference type="InterPro" id="IPR000456">
    <property type="entry name" value="Ribosomal_bL17"/>
</dbReference>
<dbReference type="InterPro" id="IPR047859">
    <property type="entry name" value="Ribosomal_bL17_CS"/>
</dbReference>
<dbReference type="InterPro" id="IPR036373">
    <property type="entry name" value="Ribosomal_bL17_sf"/>
</dbReference>
<dbReference type="NCBIfam" id="TIGR00059">
    <property type="entry name" value="L17"/>
    <property type="match status" value="1"/>
</dbReference>
<dbReference type="PANTHER" id="PTHR14413:SF16">
    <property type="entry name" value="LARGE RIBOSOMAL SUBUNIT PROTEIN BL17M"/>
    <property type="match status" value="1"/>
</dbReference>
<dbReference type="PANTHER" id="PTHR14413">
    <property type="entry name" value="RIBOSOMAL PROTEIN L17"/>
    <property type="match status" value="1"/>
</dbReference>
<dbReference type="Pfam" id="PF01196">
    <property type="entry name" value="Ribosomal_L17"/>
    <property type="match status" value="1"/>
</dbReference>
<dbReference type="SUPFAM" id="SSF64263">
    <property type="entry name" value="Prokaryotic ribosomal protein L17"/>
    <property type="match status" value="1"/>
</dbReference>
<dbReference type="PROSITE" id="PS01167">
    <property type="entry name" value="RIBOSOMAL_L17"/>
    <property type="match status" value="1"/>
</dbReference>